<feature type="signal peptide" evidence="1">
    <location>
        <begin position="1"/>
        <end position="20"/>
    </location>
</feature>
<feature type="chain" id="PRO_0000042860" description="Follitropin subunit beta">
    <location>
        <begin position="21"/>
        <end position="129"/>
    </location>
</feature>
<feature type="glycosylation site" description="N-linked (GlcNAc...) asparagine" evidence="2">
    <location>
        <position position="25"/>
    </location>
</feature>
<feature type="glycosylation site" description="N-linked (GlcNAc...) asparagine" evidence="2">
    <location>
        <position position="42"/>
    </location>
</feature>
<feature type="disulfide bond" evidence="2">
    <location>
        <begin position="21"/>
        <end position="69"/>
    </location>
</feature>
<feature type="disulfide bond" evidence="2">
    <location>
        <begin position="35"/>
        <end position="84"/>
    </location>
</feature>
<feature type="disulfide bond" evidence="2">
    <location>
        <begin position="38"/>
        <end position="122"/>
    </location>
</feature>
<feature type="disulfide bond" evidence="2">
    <location>
        <begin position="46"/>
        <end position="100"/>
    </location>
</feature>
<feature type="disulfide bond" evidence="2">
    <location>
        <begin position="50"/>
        <end position="102"/>
    </location>
</feature>
<feature type="disulfide bond" evidence="2">
    <location>
        <begin position="105"/>
        <end position="112"/>
    </location>
</feature>
<reference key="1">
    <citation type="journal article" date="2003" name="Anim. Reprod. Sci.">
        <title>Cloning and sequence analysis of FSH and LH in the giant panda (Ailuropoda melanoleuca).</title>
        <authorList>
            <person name="Liao M.J."/>
            <person name="Zhu M.Y."/>
            <person name="Zhang Z.H."/>
            <person name="Zhang A.J."/>
            <person name="Li G.H."/>
            <person name="Sheng F.J."/>
        </authorList>
    </citation>
    <scope>NUCLEOTIDE SEQUENCE [MRNA]</scope>
    <source>
        <tissue>Pituitary</tissue>
    </source>
</reference>
<sequence>MKSVQLCFLFCCWRAICCKSCELTNITITVEKEECRFCISINTTWCAGYCYTRDLVYKDPARPNIQKICTFKELAYETVKVPGCAHQADSLYTYPVATECHCGKCDSDSTDCTVRGLGPSYCSFNEMKE</sequence>
<dbReference type="EMBL" id="AF448454">
    <property type="protein sequence ID" value="AAL41021.1"/>
    <property type="molecule type" value="mRNA"/>
</dbReference>
<dbReference type="RefSeq" id="NP_001291794.1">
    <property type="nucleotide sequence ID" value="NM_001304865.1"/>
</dbReference>
<dbReference type="SMR" id="Q8WN19"/>
<dbReference type="FunCoup" id="Q8WN19">
    <property type="interactions" value="18"/>
</dbReference>
<dbReference type="STRING" id="9646.ENSAMEP00000016699"/>
<dbReference type="GlyCosmos" id="Q8WN19">
    <property type="glycosylation" value="2 sites, No reported glycans"/>
</dbReference>
<dbReference type="GeneID" id="100482376"/>
<dbReference type="KEGG" id="aml:100482376"/>
<dbReference type="CTD" id="2488"/>
<dbReference type="eggNOG" id="ENOG502S39C">
    <property type="taxonomic scope" value="Eukaryota"/>
</dbReference>
<dbReference type="InParanoid" id="Q8WN19"/>
<dbReference type="OrthoDB" id="8453657at2759"/>
<dbReference type="Proteomes" id="UP000008912">
    <property type="component" value="Unassembled WGS sequence"/>
</dbReference>
<dbReference type="GO" id="GO:0005737">
    <property type="term" value="C:cytoplasm"/>
    <property type="evidence" value="ECO:0007669"/>
    <property type="project" value="TreeGrafter"/>
</dbReference>
<dbReference type="GO" id="GO:0005615">
    <property type="term" value="C:extracellular space"/>
    <property type="evidence" value="ECO:0000250"/>
    <property type="project" value="UniProtKB"/>
</dbReference>
<dbReference type="GO" id="GO:0016914">
    <property type="term" value="C:follicle-stimulating hormone complex"/>
    <property type="evidence" value="ECO:0000250"/>
    <property type="project" value="UniProtKB"/>
</dbReference>
<dbReference type="GO" id="GO:0016913">
    <property type="term" value="F:follicle-stimulating hormone activity"/>
    <property type="evidence" value="ECO:0000250"/>
    <property type="project" value="UniProtKB"/>
</dbReference>
<dbReference type="GO" id="GO:0042699">
    <property type="term" value="P:follicle-stimulating hormone signaling pathway"/>
    <property type="evidence" value="ECO:0007669"/>
    <property type="project" value="TreeGrafter"/>
</dbReference>
<dbReference type="GO" id="GO:0007186">
    <property type="term" value="P:G protein-coupled receptor signaling pathway"/>
    <property type="evidence" value="ECO:0000250"/>
    <property type="project" value="UniProtKB"/>
</dbReference>
<dbReference type="GO" id="GO:0010469">
    <property type="term" value="P:regulation of signaling receptor activity"/>
    <property type="evidence" value="ECO:0000250"/>
    <property type="project" value="UniProtKB"/>
</dbReference>
<dbReference type="CDD" id="cd00069">
    <property type="entry name" value="GHB_like"/>
    <property type="match status" value="1"/>
</dbReference>
<dbReference type="FunFam" id="2.10.90.10:FF:000007">
    <property type="entry name" value="Luteinizing hormone beta subunit"/>
    <property type="match status" value="1"/>
</dbReference>
<dbReference type="Gene3D" id="2.10.90.10">
    <property type="entry name" value="Cystine-knot cytokines"/>
    <property type="match status" value="1"/>
</dbReference>
<dbReference type="InterPro" id="IPR029034">
    <property type="entry name" value="Cystine-knot_cytokine"/>
</dbReference>
<dbReference type="InterPro" id="IPR006208">
    <property type="entry name" value="Glyco_hormone_CN"/>
</dbReference>
<dbReference type="InterPro" id="IPR001545">
    <property type="entry name" value="Gonadotropin_bsu"/>
</dbReference>
<dbReference type="InterPro" id="IPR018245">
    <property type="entry name" value="Gonadotropin_bsu_CS"/>
</dbReference>
<dbReference type="PANTHER" id="PTHR11515:SF17">
    <property type="entry name" value="FOLLITROPIN SUBUNIT BETA"/>
    <property type="match status" value="1"/>
</dbReference>
<dbReference type="PANTHER" id="PTHR11515">
    <property type="entry name" value="GLYCOPROTEIN HORMONE BETA CHAIN"/>
    <property type="match status" value="1"/>
</dbReference>
<dbReference type="Pfam" id="PF00007">
    <property type="entry name" value="Cys_knot"/>
    <property type="match status" value="1"/>
</dbReference>
<dbReference type="SMART" id="SM00068">
    <property type="entry name" value="GHB"/>
    <property type="match status" value="1"/>
</dbReference>
<dbReference type="SUPFAM" id="SSF57501">
    <property type="entry name" value="Cystine-knot cytokines"/>
    <property type="match status" value="1"/>
</dbReference>
<dbReference type="PROSITE" id="PS00261">
    <property type="entry name" value="GLYCO_HORMONE_BETA_1"/>
    <property type="match status" value="1"/>
</dbReference>
<dbReference type="PROSITE" id="PS00689">
    <property type="entry name" value="GLYCO_HORMONE_BETA_2"/>
    <property type="match status" value="1"/>
</dbReference>
<gene>
    <name type="primary">FSHB</name>
</gene>
<proteinExistence type="evidence at transcript level"/>
<name>FSHB_AILME</name>
<keyword id="KW-1015">Disulfide bond</keyword>
<keyword id="KW-0325">Glycoprotein</keyword>
<keyword id="KW-0372">Hormone</keyword>
<keyword id="KW-1185">Reference proteome</keyword>
<keyword id="KW-0964">Secreted</keyword>
<keyword id="KW-0732">Signal</keyword>
<protein>
    <recommendedName>
        <fullName>Follitropin subunit beta</fullName>
    </recommendedName>
    <alternativeName>
        <fullName>Follicle-stimulating hormone beta subunit</fullName>
        <shortName>FSH-B</shortName>
        <shortName>FSH-beta</shortName>
    </alternativeName>
    <alternativeName>
        <fullName>Follitropin beta chain</fullName>
    </alternativeName>
</protein>
<comment type="function">
    <text evidence="2">Together with the alpha chain CGA constitutes follitropin, the follicle-stimulating hormone, and provides its biological specificity to the hormone heterodimer. Binds FSHR, a G protein-coupled receptor, on target cells to activate downstream signaling pathways. Follitropin is involved in follicle development and spermatogenesis in reproductive organs.</text>
</comment>
<comment type="subunit">
    <text evidence="2">Heterodimer. The active follitropin is a heterodimer composed of an alpha chain/CGA shared with other hormones and a unique beta chain/FSHB shown here.</text>
</comment>
<comment type="subcellular location">
    <subcellularLocation>
        <location evidence="2">Secreted</location>
    </subcellularLocation>
    <text evidence="2">Efficient secretion requires dimerization with CGA.</text>
</comment>
<comment type="similarity">
    <text evidence="3">Belongs to the glycoprotein hormones subunit beta family.</text>
</comment>
<accession>Q8WN19</accession>
<organism>
    <name type="scientific">Ailuropoda melanoleuca</name>
    <name type="common">Giant panda</name>
    <dbReference type="NCBI Taxonomy" id="9646"/>
    <lineage>
        <taxon>Eukaryota</taxon>
        <taxon>Metazoa</taxon>
        <taxon>Chordata</taxon>
        <taxon>Craniata</taxon>
        <taxon>Vertebrata</taxon>
        <taxon>Euteleostomi</taxon>
        <taxon>Mammalia</taxon>
        <taxon>Eutheria</taxon>
        <taxon>Laurasiatheria</taxon>
        <taxon>Carnivora</taxon>
        <taxon>Caniformia</taxon>
        <taxon>Ursidae</taxon>
        <taxon>Ailuropoda</taxon>
    </lineage>
</organism>
<evidence type="ECO:0000250" key="1"/>
<evidence type="ECO:0000250" key="2">
    <source>
        <dbReference type="UniProtKB" id="P01225"/>
    </source>
</evidence>
<evidence type="ECO:0000305" key="3"/>